<sequence>MELKGKRVLVVGLGESGLAMAKWLHRQGALVRVADSRDNPPNIDALQRVAPGAELVAGAFAEATFAGADFVALSPGVPKATPEIAALEIPLISEIELFADGVREQVPNSQIIAITGSNGKTTTTALTAHLLNGAGVPAIACGNISPSALDALMDAQDAGALPQVWVVELSSFQLETTHHLNAAAATVLNVSEDHLDRYEGSLANYAAAKSRVFQGKGVMVLNRDDDWSMANGRCGRKMVTFGLNAAPRGVDYGYADGAIWRGKDKLVAIDALKLSGLHNAANAMAALALCEAIGVDPLRLIEPLKGFSGLPHRVETVAEIGGVLYVDDSKGTNVGATLAAIEGMGRKVAIVLGGDGKGQDFSPLKPALEKHGRAVALIGRDAAAIGMALEGSGVPTRILGDMEAAVLWLAAQAQAGDCVLLSPACASLDMYRNYAHRAQAFIDAVEGLKS</sequence>
<name>MURD_DECAR</name>
<proteinExistence type="inferred from homology"/>
<reference key="1">
    <citation type="journal article" date="2009" name="BMC Genomics">
        <title>Metabolic analysis of the soil microbe Dechloromonas aromatica str. RCB: indications of a surprisingly complex life-style and cryptic anaerobic pathways for aromatic degradation.</title>
        <authorList>
            <person name="Salinero K.K."/>
            <person name="Keller K."/>
            <person name="Feil W.S."/>
            <person name="Feil H."/>
            <person name="Trong S."/>
            <person name="Di Bartolo G."/>
            <person name="Lapidus A."/>
        </authorList>
    </citation>
    <scope>NUCLEOTIDE SEQUENCE [LARGE SCALE GENOMIC DNA]</scope>
    <source>
        <strain>RCB</strain>
    </source>
</reference>
<dbReference type="EC" id="6.3.2.9" evidence="1"/>
<dbReference type="EMBL" id="CP000089">
    <property type="protein sequence ID" value="AAZ48229.1"/>
    <property type="molecule type" value="Genomic_DNA"/>
</dbReference>
<dbReference type="SMR" id="Q47AA2"/>
<dbReference type="STRING" id="159087.Daro_3500"/>
<dbReference type="KEGG" id="dar:Daro_3500"/>
<dbReference type="eggNOG" id="COG0771">
    <property type="taxonomic scope" value="Bacteria"/>
</dbReference>
<dbReference type="HOGENOM" id="CLU_032540_1_0_4"/>
<dbReference type="OrthoDB" id="9809796at2"/>
<dbReference type="UniPathway" id="UPA00219"/>
<dbReference type="GO" id="GO:0005737">
    <property type="term" value="C:cytoplasm"/>
    <property type="evidence" value="ECO:0007669"/>
    <property type="project" value="UniProtKB-SubCell"/>
</dbReference>
<dbReference type="GO" id="GO:0005524">
    <property type="term" value="F:ATP binding"/>
    <property type="evidence" value="ECO:0007669"/>
    <property type="project" value="UniProtKB-UniRule"/>
</dbReference>
<dbReference type="GO" id="GO:0008764">
    <property type="term" value="F:UDP-N-acetylmuramoylalanine-D-glutamate ligase activity"/>
    <property type="evidence" value="ECO:0007669"/>
    <property type="project" value="UniProtKB-UniRule"/>
</dbReference>
<dbReference type="GO" id="GO:0051301">
    <property type="term" value="P:cell division"/>
    <property type="evidence" value="ECO:0007669"/>
    <property type="project" value="UniProtKB-KW"/>
</dbReference>
<dbReference type="GO" id="GO:0071555">
    <property type="term" value="P:cell wall organization"/>
    <property type="evidence" value="ECO:0007669"/>
    <property type="project" value="UniProtKB-KW"/>
</dbReference>
<dbReference type="GO" id="GO:0009252">
    <property type="term" value="P:peptidoglycan biosynthetic process"/>
    <property type="evidence" value="ECO:0007669"/>
    <property type="project" value="UniProtKB-UniRule"/>
</dbReference>
<dbReference type="GO" id="GO:0008360">
    <property type="term" value="P:regulation of cell shape"/>
    <property type="evidence" value="ECO:0007669"/>
    <property type="project" value="UniProtKB-KW"/>
</dbReference>
<dbReference type="Gene3D" id="3.90.190.20">
    <property type="entry name" value="Mur ligase, C-terminal domain"/>
    <property type="match status" value="1"/>
</dbReference>
<dbReference type="Gene3D" id="3.40.1190.10">
    <property type="entry name" value="Mur-like, catalytic domain"/>
    <property type="match status" value="1"/>
</dbReference>
<dbReference type="Gene3D" id="3.40.50.720">
    <property type="entry name" value="NAD(P)-binding Rossmann-like Domain"/>
    <property type="match status" value="1"/>
</dbReference>
<dbReference type="HAMAP" id="MF_00639">
    <property type="entry name" value="MurD"/>
    <property type="match status" value="1"/>
</dbReference>
<dbReference type="InterPro" id="IPR036565">
    <property type="entry name" value="Mur-like_cat_sf"/>
</dbReference>
<dbReference type="InterPro" id="IPR004101">
    <property type="entry name" value="Mur_ligase_C"/>
</dbReference>
<dbReference type="InterPro" id="IPR036615">
    <property type="entry name" value="Mur_ligase_C_dom_sf"/>
</dbReference>
<dbReference type="InterPro" id="IPR013221">
    <property type="entry name" value="Mur_ligase_cen"/>
</dbReference>
<dbReference type="InterPro" id="IPR005762">
    <property type="entry name" value="MurD"/>
</dbReference>
<dbReference type="NCBIfam" id="TIGR01087">
    <property type="entry name" value="murD"/>
    <property type="match status" value="1"/>
</dbReference>
<dbReference type="PANTHER" id="PTHR43692">
    <property type="entry name" value="UDP-N-ACETYLMURAMOYLALANINE--D-GLUTAMATE LIGASE"/>
    <property type="match status" value="1"/>
</dbReference>
<dbReference type="PANTHER" id="PTHR43692:SF1">
    <property type="entry name" value="UDP-N-ACETYLMURAMOYLALANINE--D-GLUTAMATE LIGASE"/>
    <property type="match status" value="1"/>
</dbReference>
<dbReference type="Pfam" id="PF02875">
    <property type="entry name" value="Mur_ligase_C"/>
    <property type="match status" value="1"/>
</dbReference>
<dbReference type="Pfam" id="PF08245">
    <property type="entry name" value="Mur_ligase_M"/>
    <property type="match status" value="1"/>
</dbReference>
<dbReference type="Pfam" id="PF21799">
    <property type="entry name" value="MurD-like_N"/>
    <property type="match status" value="1"/>
</dbReference>
<dbReference type="SUPFAM" id="SSF51984">
    <property type="entry name" value="MurCD N-terminal domain"/>
    <property type="match status" value="1"/>
</dbReference>
<dbReference type="SUPFAM" id="SSF53623">
    <property type="entry name" value="MurD-like peptide ligases, catalytic domain"/>
    <property type="match status" value="1"/>
</dbReference>
<dbReference type="SUPFAM" id="SSF53244">
    <property type="entry name" value="MurD-like peptide ligases, peptide-binding domain"/>
    <property type="match status" value="1"/>
</dbReference>
<organism>
    <name type="scientific">Dechloromonas aromatica (strain RCB)</name>
    <dbReference type="NCBI Taxonomy" id="159087"/>
    <lineage>
        <taxon>Bacteria</taxon>
        <taxon>Pseudomonadati</taxon>
        <taxon>Pseudomonadota</taxon>
        <taxon>Betaproteobacteria</taxon>
        <taxon>Rhodocyclales</taxon>
        <taxon>Azonexaceae</taxon>
        <taxon>Dechloromonas</taxon>
    </lineage>
</organism>
<comment type="function">
    <text evidence="1">Cell wall formation. Catalyzes the addition of glutamate to the nucleotide precursor UDP-N-acetylmuramoyl-L-alanine (UMA).</text>
</comment>
<comment type="catalytic activity">
    <reaction evidence="1">
        <text>UDP-N-acetyl-alpha-D-muramoyl-L-alanine + D-glutamate + ATP = UDP-N-acetyl-alpha-D-muramoyl-L-alanyl-D-glutamate + ADP + phosphate + H(+)</text>
        <dbReference type="Rhea" id="RHEA:16429"/>
        <dbReference type="ChEBI" id="CHEBI:15378"/>
        <dbReference type="ChEBI" id="CHEBI:29986"/>
        <dbReference type="ChEBI" id="CHEBI:30616"/>
        <dbReference type="ChEBI" id="CHEBI:43474"/>
        <dbReference type="ChEBI" id="CHEBI:83898"/>
        <dbReference type="ChEBI" id="CHEBI:83900"/>
        <dbReference type="ChEBI" id="CHEBI:456216"/>
        <dbReference type="EC" id="6.3.2.9"/>
    </reaction>
</comment>
<comment type="pathway">
    <text evidence="1">Cell wall biogenesis; peptidoglycan biosynthesis.</text>
</comment>
<comment type="subcellular location">
    <subcellularLocation>
        <location evidence="1">Cytoplasm</location>
    </subcellularLocation>
</comment>
<comment type="similarity">
    <text evidence="1">Belongs to the MurCDEF family.</text>
</comment>
<keyword id="KW-0067">ATP-binding</keyword>
<keyword id="KW-0131">Cell cycle</keyword>
<keyword id="KW-0132">Cell division</keyword>
<keyword id="KW-0133">Cell shape</keyword>
<keyword id="KW-0961">Cell wall biogenesis/degradation</keyword>
<keyword id="KW-0963">Cytoplasm</keyword>
<keyword id="KW-0436">Ligase</keyword>
<keyword id="KW-0547">Nucleotide-binding</keyword>
<keyword id="KW-0573">Peptidoglycan synthesis</keyword>
<evidence type="ECO:0000255" key="1">
    <source>
        <dbReference type="HAMAP-Rule" id="MF_00639"/>
    </source>
</evidence>
<gene>
    <name evidence="1" type="primary">murD</name>
    <name type="ordered locus">Daro_3500</name>
</gene>
<accession>Q47AA2</accession>
<feature type="chain" id="PRO_0000257184" description="UDP-N-acetylmuramoylalanine--D-glutamate ligase">
    <location>
        <begin position="1"/>
        <end position="450"/>
    </location>
</feature>
<feature type="binding site" evidence="1">
    <location>
        <begin position="116"/>
        <end position="122"/>
    </location>
    <ligand>
        <name>ATP</name>
        <dbReference type="ChEBI" id="CHEBI:30616"/>
    </ligand>
</feature>
<protein>
    <recommendedName>
        <fullName evidence="1">UDP-N-acetylmuramoylalanine--D-glutamate ligase</fullName>
        <ecNumber evidence="1">6.3.2.9</ecNumber>
    </recommendedName>
    <alternativeName>
        <fullName evidence="1">D-glutamic acid-adding enzyme</fullName>
    </alternativeName>
    <alternativeName>
        <fullName evidence="1">UDP-N-acetylmuramoyl-L-alanyl-D-glutamate synthetase</fullName>
    </alternativeName>
</protein>